<keyword id="KW-1185">Reference proteome</keyword>
<keyword id="KW-0687">Ribonucleoprotein</keyword>
<keyword id="KW-0689">Ribosomal protein</keyword>
<keyword id="KW-0694">RNA-binding</keyword>
<keyword id="KW-0699">rRNA-binding</keyword>
<evidence type="ECO:0000255" key="1">
    <source>
        <dbReference type="HAMAP-Rule" id="MF_01365"/>
    </source>
</evidence>
<evidence type="ECO:0000305" key="2"/>
<feature type="chain" id="PRO_0000260875" description="Large ribosomal subunit protein uL6">
    <location>
        <begin position="1"/>
        <end position="177"/>
    </location>
</feature>
<accession>Q2S927</accession>
<organism>
    <name type="scientific">Hahella chejuensis (strain KCTC 2396)</name>
    <dbReference type="NCBI Taxonomy" id="349521"/>
    <lineage>
        <taxon>Bacteria</taxon>
        <taxon>Pseudomonadati</taxon>
        <taxon>Pseudomonadota</taxon>
        <taxon>Gammaproteobacteria</taxon>
        <taxon>Oceanospirillales</taxon>
        <taxon>Hahellaceae</taxon>
        <taxon>Hahella</taxon>
    </lineage>
</organism>
<comment type="function">
    <text evidence="1">This protein binds to the 23S rRNA, and is important in its secondary structure. It is located near the subunit interface in the base of the L7/L12 stalk, and near the tRNA binding site of the peptidyltransferase center.</text>
</comment>
<comment type="subunit">
    <text evidence="1">Part of the 50S ribosomal subunit.</text>
</comment>
<comment type="similarity">
    <text evidence="1">Belongs to the universal ribosomal protein uL6 family.</text>
</comment>
<name>RL6_HAHCH</name>
<gene>
    <name evidence="1" type="primary">rplF</name>
    <name type="ordered locus">HCH_06201</name>
</gene>
<proteinExistence type="inferred from homology"/>
<dbReference type="EMBL" id="CP000155">
    <property type="protein sequence ID" value="ABC32847.1"/>
    <property type="molecule type" value="Genomic_DNA"/>
</dbReference>
<dbReference type="RefSeq" id="WP_011399905.1">
    <property type="nucleotide sequence ID" value="NC_007645.1"/>
</dbReference>
<dbReference type="SMR" id="Q2S927"/>
<dbReference type="STRING" id="349521.HCH_06201"/>
<dbReference type="KEGG" id="hch:HCH_06201"/>
<dbReference type="eggNOG" id="COG0097">
    <property type="taxonomic scope" value="Bacteria"/>
</dbReference>
<dbReference type="HOGENOM" id="CLU_065464_1_2_6"/>
<dbReference type="OrthoDB" id="9805007at2"/>
<dbReference type="Proteomes" id="UP000000238">
    <property type="component" value="Chromosome"/>
</dbReference>
<dbReference type="GO" id="GO:0022625">
    <property type="term" value="C:cytosolic large ribosomal subunit"/>
    <property type="evidence" value="ECO:0007669"/>
    <property type="project" value="TreeGrafter"/>
</dbReference>
<dbReference type="GO" id="GO:0019843">
    <property type="term" value="F:rRNA binding"/>
    <property type="evidence" value="ECO:0007669"/>
    <property type="project" value="UniProtKB-UniRule"/>
</dbReference>
<dbReference type="GO" id="GO:0003735">
    <property type="term" value="F:structural constituent of ribosome"/>
    <property type="evidence" value="ECO:0007669"/>
    <property type="project" value="InterPro"/>
</dbReference>
<dbReference type="GO" id="GO:0002181">
    <property type="term" value="P:cytoplasmic translation"/>
    <property type="evidence" value="ECO:0007669"/>
    <property type="project" value="TreeGrafter"/>
</dbReference>
<dbReference type="FunFam" id="3.90.930.12:FF:000001">
    <property type="entry name" value="50S ribosomal protein L6"/>
    <property type="match status" value="1"/>
</dbReference>
<dbReference type="FunFam" id="3.90.930.12:FF:000002">
    <property type="entry name" value="50S ribosomal protein L6"/>
    <property type="match status" value="1"/>
</dbReference>
<dbReference type="Gene3D" id="3.90.930.12">
    <property type="entry name" value="Ribosomal protein L6, alpha-beta domain"/>
    <property type="match status" value="2"/>
</dbReference>
<dbReference type="HAMAP" id="MF_01365_B">
    <property type="entry name" value="Ribosomal_uL6_B"/>
    <property type="match status" value="1"/>
</dbReference>
<dbReference type="InterPro" id="IPR000702">
    <property type="entry name" value="Ribosomal_uL6-like"/>
</dbReference>
<dbReference type="InterPro" id="IPR036789">
    <property type="entry name" value="Ribosomal_uL6-like_a/b-dom_sf"/>
</dbReference>
<dbReference type="InterPro" id="IPR020040">
    <property type="entry name" value="Ribosomal_uL6_a/b-dom"/>
</dbReference>
<dbReference type="InterPro" id="IPR019906">
    <property type="entry name" value="Ribosomal_uL6_bac-type"/>
</dbReference>
<dbReference type="InterPro" id="IPR002358">
    <property type="entry name" value="Ribosomal_uL6_CS"/>
</dbReference>
<dbReference type="NCBIfam" id="TIGR03654">
    <property type="entry name" value="L6_bact"/>
    <property type="match status" value="1"/>
</dbReference>
<dbReference type="PANTHER" id="PTHR11655">
    <property type="entry name" value="60S/50S RIBOSOMAL PROTEIN L6/L9"/>
    <property type="match status" value="1"/>
</dbReference>
<dbReference type="PANTHER" id="PTHR11655:SF14">
    <property type="entry name" value="LARGE RIBOSOMAL SUBUNIT PROTEIN UL6M"/>
    <property type="match status" value="1"/>
</dbReference>
<dbReference type="Pfam" id="PF00347">
    <property type="entry name" value="Ribosomal_L6"/>
    <property type="match status" value="2"/>
</dbReference>
<dbReference type="PIRSF" id="PIRSF002162">
    <property type="entry name" value="Ribosomal_L6"/>
    <property type="match status" value="1"/>
</dbReference>
<dbReference type="PRINTS" id="PR00059">
    <property type="entry name" value="RIBOSOMALL6"/>
</dbReference>
<dbReference type="SUPFAM" id="SSF56053">
    <property type="entry name" value="Ribosomal protein L6"/>
    <property type="match status" value="2"/>
</dbReference>
<dbReference type="PROSITE" id="PS00525">
    <property type="entry name" value="RIBOSOMAL_L6_1"/>
    <property type="match status" value="1"/>
</dbReference>
<protein>
    <recommendedName>
        <fullName evidence="1">Large ribosomal subunit protein uL6</fullName>
    </recommendedName>
    <alternativeName>
        <fullName evidence="2">50S ribosomal protein L6</fullName>
    </alternativeName>
</protein>
<sequence>MSRVAKNPVQIPAGVEVKFDGRLVNIKGGKGALSLSVHPSVEVKQEDGALTFGPKEGSNQARALAGTTRALINNMVLGVTQGFERKLELIGVGYRAQAQGKAINLTLGFSHPVVFEIPEGITAETPTQTEIVIRGIDKQKVGQVAAEIRSIRPPEPYKGKGVRYSGEQVRVKEAKKK</sequence>
<reference key="1">
    <citation type="journal article" date="2005" name="Nucleic Acids Res.">
        <title>Genomic blueprint of Hahella chejuensis, a marine microbe producing an algicidal agent.</title>
        <authorList>
            <person name="Jeong H."/>
            <person name="Yim J.H."/>
            <person name="Lee C."/>
            <person name="Choi S.-H."/>
            <person name="Park Y.K."/>
            <person name="Yoon S.H."/>
            <person name="Hur C.-G."/>
            <person name="Kang H.-Y."/>
            <person name="Kim D."/>
            <person name="Lee H.H."/>
            <person name="Park K.H."/>
            <person name="Park S.-H."/>
            <person name="Park H.-S."/>
            <person name="Lee H.K."/>
            <person name="Oh T.K."/>
            <person name="Kim J.F."/>
        </authorList>
    </citation>
    <scope>NUCLEOTIDE SEQUENCE [LARGE SCALE GENOMIC DNA]</scope>
    <source>
        <strain>KCTC 2396</strain>
    </source>
</reference>